<evidence type="ECO:0000255" key="1">
    <source>
        <dbReference type="HAMAP-Rule" id="MF_01368"/>
    </source>
</evidence>
<evidence type="ECO:0000305" key="2"/>
<dbReference type="EMBL" id="CP000915">
    <property type="protein sequence ID" value="ACD31323.1"/>
    <property type="molecule type" value="Genomic_DNA"/>
</dbReference>
<dbReference type="SMR" id="B2SDV9"/>
<dbReference type="KEGG" id="ftm:FTM_1501"/>
<dbReference type="HOGENOM" id="CLU_074407_2_0_6"/>
<dbReference type="GO" id="GO:0022625">
    <property type="term" value="C:cytosolic large ribosomal subunit"/>
    <property type="evidence" value="ECO:0007669"/>
    <property type="project" value="TreeGrafter"/>
</dbReference>
<dbReference type="GO" id="GO:0003735">
    <property type="term" value="F:structural constituent of ribosome"/>
    <property type="evidence" value="ECO:0007669"/>
    <property type="project" value="InterPro"/>
</dbReference>
<dbReference type="GO" id="GO:0006412">
    <property type="term" value="P:translation"/>
    <property type="evidence" value="ECO:0007669"/>
    <property type="project" value="UniProtKB-UniRule"/>
</dbReference>
<dbReference type="Gene3D" id="3.90.1030.10">
    <property type="entry name" value="Ribosomal protein L17"/>
    <property type="match status" value="1"/>
</dbReference>
<dbReference type="HAMAP" id="MF_01368">
    <property type="entry name" value="Ribosomal_bL17"/>
    <property type="match status" value="1"/>
</dbReference>
<dbReference type="InterPro" id="IPR000456">
    <property type="entry name" value="Ribosomal_bL17"/>
</dbReference>
<dbReference type="InterPro" id="IPR047859">
    <property type="entry name" value="Ribosomal_bL17_CS"/>
</dbReference>
<dbReference type="InterPro" id="IPR036373">
    <property type="entry name" value="Ribosomal_bL17_sf"/>
</dbReference>
<dbReference type="NCBIfam" id="TIGR00059">
    <property type="entry name" value="L17"/>
    <property type="match status" value="1"/>
</dbReference>
<dbReference type="PANTHER" id="PTHR14413:SF16">
    <property type="entry name" value="LARGE RIBOSOMAL SUBUNIT PROTEIN BL17M"/>
    <property type="match status" value="1"/>
</dbReference>
<dbReference type="PANTHER" id="PTHR14413">
    <property type="entry name" value="RIBOSOMAL PROTEIN L17"/>
    <property type="match status" value="1"/>
</dbReference>
<dbReference type="Pfam" id="PF01196">
    <property type="entry name" value="Ribosomal_L17"/>
    <property type="match status" value="1"/>
</dbReference>
<dbReference type="SUPFAM" id="SSF64263">
    <property type="entry name" value="Prokaryotic ribosomal protein L17"/>
    <property type="match status" value="1"/>
</dbReference>
<dbReference type="PROSITE" id="PS01167">
    <property type="entry name" value="RIBOSOMAL_L17"/>
    <property type="match status" value="1"/>
</dbReference>
<proteinExistence type="inferred from homology"/>
<reference key="1">
    <citation type="journal article" date="2009" name="PLoS Pathog.">
        <title>Molecular evolutionary consequences of niche restriction in Francisella tularensis, a facultative intracellular pathogen.</title>
        <authorList>
            <person name="Larsson P."/>
            <person name="Elfsmark D."/>
            <person name="Svensson K."/>
            <person name="Wikstroem P."/>
            <person name="Forsman M."/>
            <person name="Brettin T."/>
            <person name="Keim P."/>
            <person name="Johansson A."/>
        </authorList>
    </citation>
    <scope>NUCLEOTIDE SEQUENCE [LARGE SCALE GENOMIC DNA]</scope>
    <source>
        <strain>FSC147</strain>
    </source>
</reference>
<feature type="chain" id="PRO_1000144430" description="Large ribosomal subunit protein bL17">
    <location>
        <begin position="1"/>
        <end position="145"/>
    </location>
</feature>
<organism>
    <name type="scientific">Francisella tularensis subsp. mediasiatica (strain FSC147)</name>
    <dbReference type="NCBI Taxonomy" id="441952"/>
    <lineage>
        <taxon>Bacteria</taxon>
        <taxon>Pseudomonadati</taxon>
        <taxon>Pseudomonadota</taxon>
        <taxon>Gammaproteobacteria</taxon>
        <taxon>Thiotrichales</taxon>
        <taxon>Francisellaceae</taxon>
        <taxon>Francisella</taxon>
    </lineage>
</organism>
<keyword id="KW-0687">Ribonucleoprotein</keyword>
<keyword id="KW-0689">Ribosomal protein</keyword>
<name>RL17_FRATM</name>
<protein>
    <recommendedName>
        <fullName evidence="1">Large ribosomal subunit protein bL17</fullName>
    </recommendedName>
    <alternativeName>
        <fullName evidence="2">50S ribosomal protein L17</fullName>
    </alternativeName>
</protein>
<gene>
    <name evidence="1" type="primary">rplQ</name>
    <name type="ordered locus">FTM_1501</name>
</gene>
<comment type="subunit">
    <text evidence="1">Part of the 50S ribosomal subunit. Contacts protein L32.</text>
</comment>
<comment type="similarity">
    <text evidence="1">Belongs to the bacterial ribosomal protein bL17 family.</text>
</comment>
<accession>B2SDV9</accession>
<sequence>MRHRKQGRKFGRTSSHRKAMFKNMSASLINHELIKTTLPKAKELRTIVEPLVTLAKREHKLRQELDTNSNEFKAQSVALRRQAFDFLRNKAAVTKLFEEFGARYAERAGGYTRILKCGYRFGDKAPMAFIELVDRPQVEEAADEE</sequence>